<dbReference type="EC" id="2.2.1.1"/>
<dbReference type="EMBL" id="BX571856">
    <property type="protein sequence ID" value="CAG40351.1"/>
    <property type="molecule type" value="Genomic_DNA"/>
</dbReference>
<dbReference type="RefSeq" id="WP_000481454.1">
    <property type="nucleotide sequence ID" value="NC_002952.2"/>
</dbReference>
<dbReference type="SMR" id="Q6GH64"/>
<dbReference type="KEGG" id="sar:SAR1352"/>
<dbReference type="HOGENOM" id="CLU_009227_0_0_9"/>
<dbReference type="UniPathway" id="UPA00115"/>
<dbReference type="UniPathway" id="UPA00116"/>
<dbReference type="Proteomes" id="UP000000596">
    <property type="component" value="Chromosome"/>
</dbReference>
<dbReference type="GO" id="GO:0005829">
    <property type="term" value="C:cytosol"/>
    <property type="evidence" value="ECO:0007669"/>
    <property type="project" value="TreeGrafter"/>
</dbReference>
<dbReference type="GO" id="GO:0046872">
    <property type="term" value="F:metal ion binding"/>
    <property type="evidence" value="ECO:0007669"/>
    <property type="project" value="UniProtKB-KW"/>
</dbReference>
<dbReference type="GO" id="GO:0004802">
    <property type="term" value="F:transketolase activity"/>
    <property type="evidence" value="ECO:0007669"/>
    <property type="project" value="UniProtKB-EC"/>
</dbReference>
<dbReference type="GO" id="GO:0006310">
    <property type="term" value="P:DNA recombination"/>
    <property type="evidence" value="ECO:0007669"/>
    <property type="project" value="UniProtKB-KW"/>
</dbReference>
<dbReference type="GO" id="GO:0006098">
    <property type="term" value="P:pentose-phosphate shunt"/>
    <property type="evidence" value="ECO:0007669"/>
    <property type="project" value="UniProtKB-UniPathway"/>
</dbReference>
<dbReference type="GO" id="GO:0019253">
    <property type="term" value="P:reductive pentose-phosphate cycle"/>
    <property type="evidence" value="ECO:0007669"/>
    <property type="project" value="UniProtKB-UniPathway"/>
</dbReference>
<dbReference type="CDD" id="cd07033">
    <property type="entry name" value="TPP_PYR_DXS_TK_like"/>
    <property type="match status" value="1"/>
</dbReference>
<dbReference type="CDD" id="cd02012">
    <property type="entry name" value="TPP_TK"/>
    <property type="match status" value="1"/>
</dbReference>
<dbReference type="FunFam" id="3.40.50.920:FF:000003">
    <property type="entry name" value="Transketolase"/>
    <property type="match status" value="1"/>
</dbReference>
<dbReference type="FunFam" id="3.40.50.970:FF:000003">
    <property type="entry name" value="Transketolase"/>
    <property type="match status" value="1"/>
</dbReference>
<dbReference type="FunFam" id="3.40.50.970:FF:000081">
    <property type="entry name" value="Transketolase"/>
    <property type="match status" value="1"/>
</dbReference>
<dbReference type="Gene3D" id="3.40.50.920">
    <property type="match status" value="1"/>
</dbReference>
<dbReference type="Gene3D" id="3.40.50.970">
    <property type="match status" value="2"/>
</dbReference>
<dbReference type="InterPro" id="IPR029061">
    <property type="entry name" value="THDP-binding"/>
</dbReference>
<dbReference type="InterPro" id="IPR009014">
    <property type="entry name" value="Transketo_C/PFOR_II"/>
</dbReference>
<dbReference type="InterPro" id="IPR055152">
    <property type="entry name" value="Transketolase-like_C_2"/>
</dbReference>
<dbReference type="InterPro" id="IPR005475">
    <property type="entry name" value="Transketolase-like_Pyr-bd"/>
</dbReference>
<dbReference type="InterPro" id="IPR005478">
    <property type="entry name" value="Transketolase_bac-like"/>
</dbReference>
<dbReference type="InterPro" id="IPR020826">
    <property type="entry name" value="Transketolase_BS"/>
</dbReference>
<dbReference type="InterPro" id="IPR049557">
    <property type="entry name" value="Transketolase_CS"/>
</dbReference>
<dbReference type="InterPro" id="IPR033247">
    <property type="entry name" value="Transketolase_fam"/>
</dbReference>
<dbReference type="InterPro" id="IPR005474">
    <property type="entry name" value="Transketolase_N"/>
</dbReference>
<dbReference type="NCBIfam" id="TIGR00232">
    <property type="entry name" value="tktlase_bact"/>
    <property type="match status" value="1"/>
</dbReference>
<dbReference type="PANTHER" id="PTHR43522">
    <property type="entry name" value="TRANSKETOLASE"/>
    <property type="match status" value="1"/>
</dbReference>
<dbReference type="PANTHER" id="PTHR43522:SF2">
    <property type="entry name" value="TRANSKETOLASE 1-RELATED"/>
    <property type="match status" value="1"/>
</dbReference>
<dbReference type="Pfam" id="PF02779">
    <property type="entry name" value="Transket_pyr"/>
    <property type="match status" value="1"/>
</dbReference>
<dbReference type="Pfam" id="PF22613">
    <property type="entry name" value="Transketolase_C_1"/>
    <property type="match status" value="1"/>
</dbReference>
<dbReference type="Pfam" id="PF00456">
    <property type="entry name" value="Transketolase_N"/>
    <property type="match status" value="1"/>
</dbReference>
<dbReference type="SMART" id="SM00861">
    <property type="entry name" value="Transket_pyr"/>
    <property type="match status" value="1"/>
</dbReference>
<dbReference type="SUPFAM" id="SSF52518">
    <property type="entry name" value="Thiamin diphosphate-binding fold (THDP-binding)"/>
    <property type="match status" value="2"/>
</dbReference>
<dbReference type="SUPFAM" id="SSF52922">
    <property type="entry name" value="TK C-terminal domain-like"/>
    <property type="match status" value="1"/>
</dbReference>
<dbReference type="PROSITE" id="PS00801">
    <property type="entry name" value="TRANSKETOLASE_1"/>
    <property type="match status" value="1"/>
</dbReference>
<dbReference type="PROSITE" id="PS00802">
    <property type="entry name" value="TRANSKETOLASE_2"/>
    <property type="match status" value="1"/>
</dbReference>
<evidence type="ECO:0000250" key="1"/>
<evidence type="ECO:0000305" key="2"/>
<feature type="chain" id="PRO_0000191873" description="Transketolase">
    <location>
        <begin position="1"/>
        <end position="662"/>
    </location>
</feature>
<feature type="active site" description="Proton donor" evidence="1">
    <location>
        <position position="410"/>
    </location>
</feature>
<feature type="binding site" evidence="1">
    <location>
        <position position="28"/>
    </location>
    <ligand>
        <name>substrate</name>
    </ligand>
</feature>
<feature type="binding site" evidence="1">
    <location>
        <position position="68"/>
    </location>
    <ligand>
        <name>thiamine diphosphate</name>
        <dbReference type="ChEBI" id="CHEBI:58937"/>
    </ligand>
</feature>
<feature type="binding site" evidence="1">
    <location>
        <begin position="115"/>
        <end position="117"/>
    </location>
    <ligand>
        <name>thiamine diphosphate</name>
        <dbReference type="ChEBI" id="CHEBI:58937"/>
    </ligand>
</feature>
<feature type="binding site" evidence="1">
    <location>
        <position position="156"/>
    </location>
    <ligand>
        <name>Mg(2+)</name>
        <dbReference type="ChEBI" id="CHEBI:18420"/>
    </ligand>
</feature>
<feature type="binding site" evidence="1">
    <location>
        <position position="157"/>
    </location>
    <ligand>
        <name>thiamine diphosphate</name>
        <dbReference type="ChEBI" id="CHEBI:58937"/>
    </ligand>
</feature>
<feature type="binding site" evidence="1">
    <location>
        <position position="186"/>
    </location>
    <ligand>
        <name>Mg(2+)</name>
        <dbReference type="ChEBI" id="CHEBI:18420"/>
    </ligand>
</feature>
<feature type="binding site" evidence="1">
    <location>
        <position position="186"/>
    </location>
    <ligand>
        <name>thiamine diphosphate</name>
        <dbReference type="ChEBI" id="CHEBI:58937"/>
    </ligand>
</feature>
<feature type="binding site" evidence="1">
    <location>
        <position position="188"/>
    </location>
    <ligand>
        <name>Mg(2+)</name>
        <dbReference type="ChEBI" id="CHEBI:18420"/>
    </ligand>
</feature>
<feature type="binding site" evidence="1">
    <location>
        <position position="261"/>
    </location>
    <ligand>
        <name>substrate</name>
    </ligand>
</feature>
<feature type="binding site" evidence="1">
    <location>
        <position position="261"/>
    </location>
    <ligand>
        <name>thiamine diphosphate</name>
        <dbReference type="ChEBI" id="CHEBI:58937"/>
    </ligand>
</feature>
<feature type="binding site" evidence="1">
    <location>
        <position position="356"/>
    </location>
    <ligand>
        <name>substrate</name>
    </ligand>
</feature>
<feature type="binding site" evidence="1">
    <location>
        <position position="383"/>
    </location>
    <ligand>
        <name>substrate</name>
    </ligand>
</feature>
<feature type="binding site" evidence="1">
    <location>
        <position position="436"/>
    </location>
    <ligand>
        <name>thiamine diphosphate</name>
        <dbReference type="ChEBI" id="CHEBI:58937"/>
    </ligand>
</feature>
<feature type="binding site" evidence="1">
    <location>
        <position position="460"/>
    </location>
    <ligand>
        <name>substrate</name>
    </ligand>
</feature>
<feature type="binding site" evidence="1">
    <location>
        <position position="468"/>
    </location>
    <ligand>
        <name>substrate</name>
    </ligand>
</feature>
<feature type="binding site" evidence="1">
    <location>
        <position position="519"/>
    </location>
    <ligand>
        <name>substrate</name>
    </ligand>
</feature>
<feature type="site" description="Important for catalytic activity" evidence="1">
    <location>
        <position position="28"/>
    </location>
</feature>
<feature type="site" description="Important for catalytic activity" evidence="1">
    <location>
        <position position="261"/>
    </location>
</feature>
<protein>
    <recommendedName>
        <fullName>Transketolase</fullName>
        <shortName>TK</shortName>
        <ecNumber>2.2.1.1</ecNumber>
    </recommendedName>
</protein>
<gene>
    <name type="primary">tkt</name>
    <name type="ordered locus">SAR1352</name>
</gene>
<keyword id="KW-0106">Calcium</keyword>
<keyword id="KW-0233">DNA recombination</keyword>
<keyword id="KW-0460">Magnesium</keyword>
<keyword id="KW-0479">Metal-binding</keyword>
<keyword id="KW-0786">Thiamine pyrophosphate</keyword>
<keyword id="KW-0808">Transferase</keyword>
<organism>
    <name type="scientific">Staphylococcus aureus (strain MRSA252)</name>
    <dbReference type="NCBI Taxonomy" id="282458"/>
    <lineage>
        <taxon>Bacteria</taxon>
        <taxon>Bacillati</taxon>
        <taxon>Bacillota</taxon>
        <taxon>Bacilli</taxon>
        <taxon>Bacillales</taxon>
        <taxon>Staphylococcaceae</taxon>
        <taxon>Staphylococcus</taxon>
    </lineage>
</organism>
<comment type="function">
    <text evidence="1">Catalyzes the transfer of a two-carbon ketol group from a ketose donor to an aldose acceptor, via a covalent intermediate with the cofactor thiamine pyrophosphate.</text>
</comment>
<comment type="catalytic activity">
    <reaction>
        <text>D-sedoheptulose 7-phosphate + D-glyceraldehyde 3-phosphate = aldehydo-D-ribose 5-phosphate + D-xylulose 5-phosphate</text>
        <dbReference type="Rhea" id="RHEA:10508"/>
        <dbReference type="ChEBI" id="CHEBI:57483"/>
        <dbReference type="ChEBI" id="CHEBI:57737"/>
        <dbReference type="ChEBI" id="CHEBI:58273"/>
        <dbReference type="ChEBI" id="CHEBI:59776"/>
        <dbReference type="EC" id="2.2.1.1"/>
    </reaction>
</comment>
<comment type="cofactor">
    <cofactor evidence="1">
        <name>Mg(2+)</name>
        <dbReference type="ChEBI" id="CHEBI:18420"/>
    </cofactor>
    <cofactor evidence="1">
        <name>Ca(2+)</name>
        <dbReference type="ChEBI" id="CHEBI:29108"/>
    </cofactor>
    <cofactor evidence="1">
        <name>Mn(2+)</name>
        <dbReference type="ChEBI" id="CHEBI:29035"/>
    </cofactor>
    <cofactor evidence="1">
        <name>Co(2+)</name>
        <dbReference type="ChEBI" id="CHEBI:48828"/>
    </cofactor>
    <text evidence="1">Binds 1 Mg(2+) ion per subunit. Can also utilize other divalent metal cations, such as Ca(2+), Mn(2+) and Co(2+).</text>
</comment>
<comment type="cofactor">
    <cofactor evidence="1">
        <name>thiamine diphosphate</name>
        <dbReference type="ChEBI" id="CHEBI:58937"/>
    </cofactor>
    <text evidence="1">Binds 1 thiamine pyrophosphate per subunit.</text>
</comment>
<comment type="pathway">
    <text>Carbohydrate biosynthesis; Calvin cycle.</text>
</comment>
<comment type="pathway">
    <text>Carbohydrate degradation; pentose phosphate pathway.</text>
</comment>
<comment type="subunit">
    <text evidence="1">Homodimer.</text>
</comment>
<comment type="similarity">
    <text evidence="2">Belongs to the transketolase family.</text>
</comment>
<proteinExistence type="inferred from homology"/>
<accession>Q6GH64</accession>
<name>TKT_STAAR</name>
<reference key="1">
    <citation type="journal article" date="2004" name="Proc. Natl. Acad. Sci. U.S.A.">
        <title>Complete genomes of two clinical Staphylococcus aureus strains: evidence for the rapid evolution of virulence and drug resistance.</title>
        <authorList>
            <person name="Holden M.T.G."/>
            <person name="Feil E.J."/>
            <person name="Lindsay J.A."/>
            <person name="Peacock S.J."/>
            <person name="Day N.P.J."/>
            <person name="Enright M.C."/>
            <person name="Foster T.J."/>
            <person name="Moore C.E."/>
            <person name="Hurst L."/>
            <person name="Atkin R."/>
            <person name="Barron A."/>
            <person name="Bason N."/>
            <person name="Bentley S.D."/>
            <person name="Chillingworth C."/>
            <person name="Chillingworth T."/>
            <person name="Churcher C."/>
            <person name="Clark L."/>
            <person name="Corton C."/>
            <person name="Cronin A."/>
            <person name="Doggett J."/>
            <person name="Dowd L."/>
            <person name="Feltwell T."/>
            <person name="Hance Z."/>
            <person name="Harris B."/>
            <person name="Hauser H."/>
            <person name="Holroyd S."/>
            <person name="Jagels K."/>
            <person name="James K.D."/>
            <person name="Lennard N."/>
            <person name="Line A."/>
            <person name="Mayes R."/>
            <person name="Moule S."/>
            <person name="Mungall K."/>
            <person name="Ormond D."/>
            <person name="Quail M.A."/>
            <person name="Rabbinowitsch E."/>
            <person name="Rutherford K.M."/>
            <person name="Sanders M."/>
            <person name="Sharp S."/>
            <person name="Simmonds M."/>
            <person name="Stevens K."/>
            <person name="Whitehead S."/>
            <person name="Barrell B.G."/>
            <person name="Spratt B.G."/>
            <person name="Parkhill J."/>
        </authorList>
    </citation>
    <scope>NUCLEOTIDE SEQUENCE [LARGE SCALE GENOMIC DNA]</scope>
    <source>
        <strain>MRSA252</strain>
    </source>
</reference>
<sequence>MFNEKDQLAVDTLRALSIDTIEKANSGHPGLPMGAAPMAYTLWTRHLNFNPQSKDYFNRDRFVLSAGHGSALLYSLLHVSGSLELEELKQFRQWGSKTPGHPEYRHTDGVEVTTGPLGQGFSMSVGLALAEDHLAGKFNKEGYNVVDHYTYVLASDGDLMEGISHEAASFAGHNKLSKLVVLYDSNDISLDGELNKAFSENTKARFEAYGWNYLLVKDGNDLEEIDKAITTAKSQEGPTIIEVKTTIGFGSPNKAGTNGVHGAPLGEDERKLTFENYGLDPEKRFNVSEEVYEIFQNTMLKRANEDESQWNSLLEKYAETYPELAEEFKLAISGKLPKNYKDELPRFEFGHNGASRADSGTVIQAISKTVPSFFGGSADLAGSNKSNVNDATDYSSETPEGKNVWFGVREFAMGAAVNGMAAHGGLHPYGATFFVFSDYLKPALRLSSIMGLNATFIFTHDSIAVGEDGPTHEPIEQLAGLRAIPNMNVIRPADGNETRVAWEVALESESTPTSLVLTRQNLPVLDVPEDVVEEGVRKGAYTVYGSEETPEFLLLASGSEVSLAVEAAKDLEKQGKSVRVVSMPNWNAFEQQSEEYKESVIPSSVTKRVAIEMASPLGWHKYVGTAGKVIAIDGFGASAPGDLVVEKYGFTKENILNQVMSL</sequence>